<protein>
    <recommendedName>
        <fullName evidence="1">S-adenosylmethionine synthase</fullName>
        <shortName evidence="1">AdoMet synthase</shortName>
        <ecNumber evidence="1">2.5.1.6</ecNumber>
    </recommendedName>
    <alternativeName>
        <fullName evidence="1">MAT</fullName>
    </alternativeName>
    <alternativeName>
        <fullName evidence="1">Methionine adenosyltransferase</fullName>
    </alternativeName>
</protein>
<accession>P56878</accession>
<organism>
    <name type="scientific">Rickettsia prowazekii (strain Madrid E)</name>
    <dbReference type="NCBI Taxonomy" id="272947"/>
    <lineage>
        <taxon>Bacteria</taxon>
        <taxon>Pseudomonadati</taxon>
        <taxon>Pseudomonadota</taxon>
        <taxon>Alphaproteobacteria</taxon>
        <taxon>Rickettsiales</taxon>
        <taxon>Rickettsiaceae</taxon>
        <taxon>Rickettsieae</taxon>
        <taxon>Rickettsia</taxon>
        <taxon>typhus group</taxon>
    </lineage>
</organism>
<gene>
    <name evidence="1" type="primary">metK</name>
    <name type="ordered locus">RP777</name>
</gene>
<comment type="function">
    <text evidence="1">Catalyzes the formation of S-adenosylmethionine (AdoMet) from methionine and ATP. The overall synthetic reaction is composed of two sequential steps, AdoMet formation and the subsequent tripolyphosphate hydrolysis which occurs prior to release of AdoMet from the enzyme.</text>
</comment>
<comment type="catalytic activity">
    <reaction evidence="1">
        <text>L-methionine + ATP + H2O = S-adenosyl-L-methionine + phosphate + diphosphate</text>
        <dbReference type="Rhea" id="RHEA:21080"/>
        <dbReference type="ChEBI" id="CHEBI:15377"/>
        <dbReference type="ChEBI" id="CHEBI:30616"/>
        <dbReference type="ChEBI" id="CHEBI:33019"/>
        <dbReference type="ChEBI" id="CHEBI:43474"/>
        <dbReference type="ChEBI" id="CHEBI:57844"/>
        <dbReference type="ChEBI" id="CHEBI:59789"/>
        <dbReference type="EC" id="2.5.1.6"/>
    </reaction>
</comment>
<comment type="cofactor">
    <cofactor evidence="1">
        <name>Mg(2+)</name>
        <dbReference type="ChEBI" id="CHEBI:18420"/>
    </cofactor>
    <text evidence="1">Binds 2 divalent ions per subunit.</text>
</comment>
<comment type="cofactor">
    <cofactor evidence="1">
        <name>K(+)</name>
        <dbReference type="ChEBI" id="CHEBI:29103"/>
    </cofactor>
    <text evidence="1">Binds 1 potassium ion per subunit.</text>
</comment>
<comment type="pathway">
    <text evidence="1">Amino-acid biosynthesis; S-adenosyl-L-methionine biosynthesis; S-adenosyl-L-methionine from L-methionine: step 1/1.</text>
</comment>
<comment type="subunit">
    <text evidence="1">Homotetramer; dimer of dimers.</text>
</comment>
<comment type="subcellular location">
    <subcellularLocation>
        <location evidence="1">Cytoplasm</location>
    </subcellularLocation>
</comment>
<comment type="similarity">
    <text evidence="1">Belongs to the AdoMet synthase family.</text>
</comment>
<comment type="caution">
    <text evidence="2">Non-functional in strain Madrid E.</text>
</comment>
<comment type="sequence caution" evidence="2">
    <conflict type="erroneous termination">
        <sequence resource="EMBL" id="AJ235273"/>
    </conflict>
    <text>Truncated C-terminus.</text>
</comment>
<reference key="1">
    <citation type="journal article" date="1998" name="Nature">
        <title>The genome sequence of Rickettsia prowazekii and the origin of mitochondria.</title>
        <authorList>
            <person name="Andersson S.G.E."/>
            <person name="Zomorodipour A."/>
            <person name="Andersson J.O."/>
            <person name="Sicheritz-Ponten T."/>
            <person name="Alsmark U.C.M."/>
            <person name="Podowski R.M."/>
            <person name="Naeslund A.K."/>
            <person name="Eriksson A.-S."/>
            <person name="Winkler H.H."/>
            <person name="Kurland C.G."/>
        </authorList>
    </citation>
    <scope>NUCLEOTIDE SEQUENCE [LARGE SCALE GENOMIC DNA]</scope>
    <source>
        <strain>Madrid E</strain>
    </source>
</reference>
<reference key="2">
    <citation type="journal article" date="1999" name="Mol. Biol. Evol.">
        <title>Genome degradation is an ongoing process in Rickettsia.</title>
        <authorList>
            <person name="Andersson J.O."/>
            <person name="Andersson S.G.E."/>
        </authorList>
    </citation>
    <scope>NUCLEOTIDE SEQUENCE [GENOMIC DNA]</scope>
    <source>
        <strain>B</strain>
    </source>
</reference>
<sequence length="380" mass="42149">MKNFVFTSESVSEGHPDKIADQISDAVLDEILKHDPNGRVACETFVTTGLVLVGGEITTNTYVDIEQVVRNKIQEIGYNNPNYGFDGSCCAVISSIIKQSPDIAMGIDNENEEEIGAGDQGMVFGYACNETKSLMPAPIYYAHLLMKRQAYLRKQNILSWLRPDAKSQVTLRYENNKPIVIDSVVLSTQHHPEIQQKDLIEAVIEEIIKPTLPTNLLHKDTKYLINPTGRFVIGGPVADCGLTGRKIIVDSYGGMAKHGGGCFSGKDPTKIDRSAAYMARYIAKNIVGAGLADRCEIQISYAIGVADPVSVYAETFGTSKLSNEQTTKLITEHFDMRPGKIIKNLKLHTQCYQKTATYGHFGREDENFTWEQLDKVDIFK</sequence>
<keyword id="KW-0067">ATP-binding</keyword>
<keyword id="KW-0963">Cytoplasm</keyword>
<keyword id="KW-0460">Magnesium</keyword>
<keyword id="KW-0479">Metal-binding</keyword>
<keyword id="KW-0547">Nucleotide-binding</keyword>
<keyword id="KW-0554">One-carbon metabolism</keyword>
<keyword id="KW-0630">Potassium</keyword>
<keyword id="KW-1185">Reference proteome</keyword>
<keyword id="KW-0808">Transferase</keyword>
<name>METK_RICPR</name>
<dbReference type="EC" id="2.5.1.6" evidence="1"/>
<dbReference type="EMBL" id="AJ235273">
    <property type="status" value="NOT_ANNOTATED_CDS"/>
    <property type="molecule type" value="Genomic_DNA"/>
</dbReference>
<dbReference type="EMBL" id="AJ238756">
    <property type="protein sequence ID" value="CAB56090.1"/>
    <property type="molecule type" value="Genomic_DNA"/>
</dbReference>
<dbReference type="SMR" id="P56878"/>
<dbReference type="GeneID" id="57569900"/>
<dbReference type="UniPathway" id="UPA00315">
    <property type="reaction ID" value="UER00080"/>
</dbReference>
<dbReference type="Proteomes" id="UP000002480">
    <property type="component" value="Chromosome"/>
</dbReference>
<dbReference type="GO" id="GO:0005737">
    <property type="term" value="C:cytoplasm"/>
    <property type="evidence" value="ECO:0007669"/>
    <property type="project" value="UniProtKB-SubCell"/>
</dbReference>
<dbReference type="GO" id="GO:0005524">
    <property type="term" value="F:ATP binding"/>
    <property type="evidence" value="ECO:0007669"/>
    <property type="project" value="UniProtKB-UniRule"/>
</dbReference>
<dbReference type="GO" id="GO:0000287">
    <property type="term" value="F:magnesium ion binding"/>
    <property type="evidence" value="ECO:0007669"/>
    <property type="project" value="UniProtKB-UniRule"/>
</dbReference>
<dbReference type="GO" id="GO:0004478">
    <property type="term" value="F:methionine adenosyltransferase activity"/>
    <property type="evidence" value="ECO:0007669"/>
    <property type="project" value="UniProtKB-UniRule"/>
</dbReference>
<dbReference type="GO" id="GO:0006730">
    <property type="term" value="P:one-carbon metabolic process"/>
    <property type="evidence" value="ECO:0007669"/>
    <property type="project" value="UniProtKB-KW"/>
</dbReference>
<dbReference type="GO" id="GO:0006556">
    <property type="term" value="P:S-adenosylmethionine biosynthetic process"/>
    <property type="evidence" value="ECO:0007669"/>
    <property type="project" value="UniProtKB-UniRule"/>
</dbReference>
<dbReference type="CDD" id="cd18079">
    <property type="entry name" value="S-AdoMet_synt"/>
    <property type="match status" value="1"/>
</dbReference>
<dbReference type="FunFam" id="3.30.300.10:FF:000003">
    <property type="entry name" value="S-adenosylmethionine synthase"/>
    <property type="match status" value="1"/>
</dbReference>
<dbReference type="FunFam" id="3.30.300.10:FF:000004">
    <property type="entry name" value="S-adenosylmethionine synthase"/>
    <property type="match status" value="1"/>
</dbReference>
<dbReference type="Gene3D" id="3.30.300.10">
    <property type="match status" value="3"/>
</dbReference>
<dbReference type="HAMAP" id="MF_00086">
    <property type="entry name" value="S_AdoMet_synth1"/>
    <property type="match status" value="1"/>
</dbReference>
<dbReference type="InterPro" id="IPR022631">
    <property type="entry name" value="ADOMET_SYNTHASE_CS"/>
</dbReference>
<dbReference type="InterPro" id="IPR022630">
    <property type="entry name" value="S-AdoMet_synt_C"/>
</dbReference>
<dbReference type="InterPro" id="IPR022629">
    <property type="entry name" value="S-AdoMet_synt_central"/>
</dbReference>
<dbReference type="InterPro" id="IPR022628">
    <property type="entry name" value="S-AdoMet_synt_N"/>
</dbReference>
<dbReference type="InterPro" id="IPR002133">
    <property type="entry name" value="S-AdoMet_synthetase"/>
</dbReference>
<dbReference type="InterPro" id="IPR022636">
    <property type="entry name" value="S-AdoMet_synthetase_sfam"/>
</dbReference>
<dbReference type="NCBIfam" id="TIGR01034">
    <property type="entry name" value="metK"/>
    <property type="match status" value="1"/>
</dbReference>
<dbReference type="PANTHER" id="PTHR11964">
    <property type="entry name" value="S-ADENOSYLMETHIONINE SYNTHETASE"/>
    <property type="match status" value="1"/>
</dbReference>
<dbReference type="Pfam" id="PF02773">
    <property type="entry name" value="S-AdoMet_synt_C"/>
    <property type="match status" value="1"/>
</dbReference>
<dbReference type="Pfam" id="PF02772">
    <property type="entry name" value="S-AdoMet_synt_M"/>
    <property type="match status" value="1"/>
</dbReference>
<dbReference type="Pfam" id="PF00438">
    <property type="entry name" value="S-AdoMet_synt_N"/>
    <property type="match status" value="1"/>
</dbReference>
<dbReference type="PIRSF" id="PIRSF000497">
    <property type="entry name" value="MAT"/>
    <property type="match status" value="1"/>
</dbReference>
<dbReference type="SUPFAM" id="SSF55973">
    <property type="entry name" value="S-adenosylmethionine synthetase"/>
    <property type="match status" value="3"/>
</dbReference>
<dbReference type="PROSITE" id="PS00376">
    <property type="entry name" value="ADOMET_SYNTHASE_1"/>
    <property type="match status" value="1"/>
</dbReference>
<dbReference type="PROSITE" id="PS00377">
    <property type="entry name" value="ADOMET_SYNTHASE_2"/>
    <property type="match status" value="1"/>
</dbReference>
<proteinExistence type="inferred from homology"/>
<feature type="chain" id="PRO_0000174578" description="S-adenosylmethionine synthase">
    <location>
        <begin position="1"/>
        <end position="380"/>
    </location>
</feature>
<feature type="region of interest" description="Flexible loop" evidence="1">
    <location>
        <begin position="99"/>
        <end position="109"/>
    </location>
</feature>
<feature type="binding site" description="in other chain" evidence="1">
    <location>
        <position position="15"/>
    </location>
    <ligand>
        <name>ATP</name>
        <dbReference type="ChEBI" id="CHEBI:30616"/>
        <note>ligand shared between two neighboring subunits</note>
    </ligand>
</feature>
<feature type="binding site" evidence="1">
    <location>
        <position position="17"/>
    </location>
    <ligand>
        <name>Mg(2+)</name>
        <dbReference type="ChEBI" id="CHEBI:18420"/>
    </ligand>
</feature>
<feature type="binding site" evidence="1">
    <location>
        <position position="43"/>
    </location>
    <ligand>
        <name>K(+)</name>
        <dbReference type="ChEBI" id="CHEBI:29103"/>
    </ligand>
</feature>
<feature type="binding site" description="in other chain" evidence="1">
    <location>
        <position position="56"/>
    </location>
    <ligand>
        <name>L-methionine</name>
        <dbReference type="ChEBI" id="CHEBI:57844"/>
        <note>ligand shared between two neighboring subunits</note>
    </ligand>
</feature>
<feature type="binding site" description="in other chain" evidence="1">
    <location>
        <position position="99"/>
    </location>
    <ligand>
        <name>L-methionine</name>
        <dbReference type="ChEBI" id="CHEBI:57844"/>
        <note>ligand shared between two neighboring subunits</note>
    </ligand>
</feature>
<feature type="binding site" description="in other chain" evidence="1">
    <location>
        <begin position="164"/>
        <end position="166"/>
    </location>
    <ligand>
        <name>ATP</name>
        <dbReference type="ChEBI" id="CHEBI:30616"/>
        <note>ligand shared between two neighboring subunits</note>
    </ligand>
</feature>
<feature type="binding site" description="in other chain" evidence="1">
    <location>
        <begin position="230"/>
        <end position="231"/>
    </location>
    <ligand>
        <name>ATP</name>
        <dbReference type="ChEBI" id="CHEBI:30616"/>
        <note>ligand shared between two neighboring subunits</note>
    </ligand>
</feature>
<feature type="binding site" evidence="1">
    <location>
        <position position="239"/>
    </location>
    <ligand>
        <name>ATP</name>
        <dbReference type="ChEBI" id="CHEBI:30616"/>
        <note>ligand shared between two neighboring subunits</note>
    </ligand>
</feature>
<feature type="binding site" evidence="1">
    <location>
        <position position="239"/>
    </location>
    <ligand>
        <name>L-methionine</name>
        <dbReference type="ChEBI" id="CHEBI:57844"/>
        <note>ligand shared between two neighboring subunits</note>
    </ligand>
</feature>
<feature type="binding site" description="in other chain" evidence="1">
    <location>
        <begin position="245"/>
        <end position="246"/>
    </location>
    <ligand>
        <name>ATP</name>
        <dbReference type="ChEBI" id="CHEBI:30616"/>
        <note>ligand shared between two neighboring subunits</note>
    </ligand>
</feature>
<feature type="binding site" evidence="1">
    <location>
        <position position="266"/>
    </location>
    <ligand>
        <name>ATP</name>
        <dbReference type="ChEBI" id="CHEBI:30616"/>
        <note>ligand shared between two neighboring subunits</note>
    </ligand>
</feature>
<feature type="binding site" description="in other chain" evidence="1">
    <location>
        <position position="270"/>
    </location>
    <ligand>
        <name>L-methionine</name>
        <dbReference type="ChEBI" id="CHEBI:57844"/>
        <note>ligand shared between two neighboring subunits</note>
    </ligand>
</feature>
<evidence type="ECO:0000255" key="1">
    <source>
        <dbReference type="HAMAP-Rule" id="MF_00086"/>
    </source>
</evidence>
<evidence type="ECO:0000305" key="2"/>